<keyword id="KW-0997">Cell inner membrane</keyword>
<keyword id="KW-1003">Cell membrane</keyword>
<keyword id="KW-0378">Hydrolase</keyword>
<keyword id="KW-0441">Lipid A biosynthesis</keyword>
<keyword id="KW-0444">Lipid biosynthesis</keyword>
<keyword id="KW-0443">Lipid metabolism</keyword>
<keyword id="KW-0464">Manganese</keyword>
<keyword id="KW-0472">Membrane</keyword>
<keyword id="KW-0479">Metal-binding</keyword>
<gene>
    <name evidence="1" type="primary">lpxH</name>
    <name type="ordered locus">SeD_A0583</name>
</gene>
<sequence>MATLFIADLHLQTEEPAIVAGFLRFLAVEARQADALYILGDLFEAWIGDDDPNPLHREIAAAIKAVVNVGVPCFFIHGNRDFLIGKRFARESGMILLPQEKVLDLYGRNVLIMHGDTLCTDDAGYQAFRAKVHNPWVQRLFLTLPLFIRRRIAARMRAGSKAANSSKSLDIMDVNAQTVVAEMEKHRVQWLIHGHTHRPAVHELSANDQPAFRVVLGAWHHEGSMVKVTPDNVELIAFPL</sequence>
<proteinExistence type="inferred from homology"/>
<accession>B5FLP5</accession>
<feature type="chain" id="PRO_1000129531" description="UDP-2,3-diacylglucosamine hydrolase">
    <location>
        <begin position="1"/>
        <end position="240"/>
    </location>
</feature>
<feature type="binding site" evidence="1">
    <location>
        <position position="8"/>
    </location>
    <ligand>
        <name>Mn(2+)</name>
        <dbReference type="ChEBI" id="CHEBI:29035"/>
        <label>1</label>
    </ligand>
</feature>
<feature type="binding site" evidence="1">
    <location>
        <position position="10"/>
    </location>
    <ligand>
        <name>Mn(2+)</name>
        <dbReference type="ChEBI" id="CHEBI:29035"/>
        <label>1</label>
    </ligand>
</feature>
<feature type="binding site" evidence="1">
    <location>
        <position position="41"/>
    </location>
    <ligand>
        <name>Mn(2+)</name>
        <dbReference type="ChEBI" id="CHEBI:29035"/>
        <label>1</label>
    </ligand>
</feature>
<feature type="binding site" evidence="1">
    <location>
        <position position="41"/>
    </location>
    <ligand>
        <name>Mn(2+)</name>
        <dbReference type="ChEBI" id="CHEBI:29035"/>
        <label>2</label>
    </ligand>
</feature>
<feature type="binding site" evidence="1">
    <location>
        <begin position="79"/>
        <end position="80"/>
    </location>
    <ligand>
        <name>substrate</name>
    </ligand>
</feature>
<feature type="binding site" evidence="1">
    <location>
        <position position="79"/>
    </location>
    <ligand>
        <name>Mn(2+)</name>
        <dbReference type="ChEBI" id="CHEBI:29035"/>
        <label>2</label>
    </ligand>
</feature>
<feature type="binding site" evidence="1">
    <location>
        <position position="114"/>
    </location>
    <ligand>
        <name>Mn(2+)</name>
        <dbReference type="ChEBI" id="CHEBI:29035"/>
        <label>2</label>
    </ligand>
</feature>
<feature type="binding site" evidence="1">
    <location>
        <position position="122"/>
    </location>
    <ligand>
        <name>substrate</name>
    </ligand>
</feature>
<feature type="binding site" evidence="1">
    <location>
        <position position="160"/>
    </location>
    <ligand>
        <name>substrate</name>
    </ligand>
</feature>
<feature type="binding site" evidence="1">
    <location>
        <position position="164"/>
    </location>
    <ligand>
        <name>substrate</name>
    </ligand>
</feature>
<feature type="binding site" evidence="1">
    <location>
        <position position="167"/>
    </location>
    <ligand>
        <name>substrate</name>
    </ligand>
</feature>
<feature type="binding site" evidence="1">
    <location>
        <position position="195"/>
    </location>
    <ligand>
        <name>Mn(2+)</name>
        <dbReference type="ChEBI" id="CHEBI:29035"/>
        <label>2</label>
    </ligand>
</feature>
<feature type="binding site" evidence="1">
    <location>
        <position position="195"/>
    </location>
    <ligand>
        <name>substrate</name>
    </ligand>
</feature>
<feature type="binding site" evidence="1">
    <location>
        <position position="197"/>
    </location>
    <ligand>
        <name>Mn(2+)</name>
        <dbReference type="ChEBI" id="CHEBI:29035"/>
        <label>1</label>
    </ligand>
</feature>
<dbReference type="EC" id="3.6.1.54" evidence="1"/>
<dbReference type="EMBL" id="CP001144">
    <property type="protein sequence ID" value="ACH77893.1"/>
    <property type="molecule type" value="Genomic_DNA"/>
</dbReference>
<dbReference type="RefSeq" id="WP_000212278.1">
    <property type="nucleotide sequence ID" value="NC_011205.1"/>
</dbReference>
<dbReference type="SMR" id="B5FLP5"/>
<dbReference type="KEGG" id="sed:SeD_A0583"/>
<dbReference type="HOGENOM" id="CLU_074586_0_0_6"/>
<dbReference type="UniPathway" id="UPA00359">
    <property type="reaction ID" value="UER00480"/>
</dbReference>
<dbReference type="Proteomes" id="UP000008322">
    <property type="component" value="Chromosome"/>
</dbReference>
<dbReference type="GO" id="GO:0005737">
    <property type="term" value="C:cytoplasm"/>
    <property type="evidence" value="ECO:0007669"/>
    <property type="project" value="InterPro"/>
</dbReference>
<dbReference type="GO" id="GO:0019897">
    <property type="term" value="C:extrinsic component of plasma membrane"/>
    <property type="evidence" value="ECO:0007669"/>
    <property type="project" value="UniProtKB-UniRule"/>
</dbReference>
<dbReference type="GO" id="GO:0030145">
    <property type="term" value="F:manganese ion binding"/>
    <property type="evidence" value="ECO:0007669"/>
    <property type="project" value="UniProtKB-UniRule"/>
</dbReference>
<dbReference type="GO" id="GO:0008758">
    <property type="term" value="F:UDP-2,3-diacylglucosamine hydrolase activity"/>
    <property type="evidence" value="ECO:0007669"/>
    <property type="project" value="UniProtKB-UniRule"/>
</dbReference>
<dbReference type="GO" id="GO:0009245">
    <property type="term" value="P:lipid A biosynthetic process"/>
    <property type="evidence" value="ECO:0007669"/>
    <property type="project" value="UniProtKB-UniRule"/>
</dbReference>
<dbReference type="CDD" id="cd07398">
    <property type="entry name" value="MPP_YbbF-LpxH"/>
    <property type="match status" value="1"/>
</dbReference>
<dbReference type="FunFam" id="3.60.21.10:FF:000012">
    <property type="entry name" value="UDP-2,3-diacylglucosamine hydrolase"/>
    <property type="match status" value="1"/>
</dbReference>
<dbReference type="Gene3D" id="3.60.21.10">
    <property type="match status" value="1"/>
</dbReference>
<dbReference type="HAMAP" id="MF_00575">
    <property type="entry name" value="LpxH"/>
    <property type="match status" value="1"/>
</dbReference>
<dbReference type="InterPro" id="IPR004843">
    <property type="entry name" value="Calcineurin-like_PHP_ApaH"/>
</dbReference>
<dbReference type="InterPro" id="IPR043461">
    <property type="entry name" value="LpxH-like"/>
</dbReference>
<dbReference type="InterPro" id="IPR029052">
    <property type="entry name" value="Metallo-depent_PP-like"/>
</dbReference>
<dbReference type="InterPro" id="IPR010138">
    <property type="entry name" value="UDP-diacylglucosamine_Hdrlase"/>
</dbReference>
<dbReference type="NCBIfam" id="TIGR01854">
    <property type="entry name" value="lipid_A_lpxH"/>
    <property type="match status" value="1"/>
</dbReference>
<dbReference type="NCBIfam" id="NF003743">
    <property type="entry name" value="PRK05340.1"/>
    <property type="match status" value="1"/>
</dbReference>
<dbReference type="PANTHER" id="PTHR34990:SF1">
    <property type="entry name" value="UDP-2,3-DIACYLGLUCOSAMINE HYDROLASE"/>
    <property type="match status" value="1"/>
</dbReference>
<dbReference type="PANTHER" id="PTHR34990">
    <property type="entry name" value="UDP-2,3-DIACYLGLUCOSAMINE HYDROLASE-RELATED"/>
    <property type="match status" value="1"/>
</dbReference>
<dbReference type="Pfam" id="PF00149">
    <property type="entry name" value="Metallophos"/>
    <property type="match status" value="1"/>
</dbReference>
<dbReference type="SUPFAM" id="SSF56300">
    <property type="entry name" value="Metallo-dependent phosphatases"/>
    <property type="match status" value="1"/>
</dbReference>
<name>LPXH_SALDC</name>
<protein>
    <recommendedName>
        <fullName evidence="1">UDP-2,3-diacylglucosamine hydrolase</fullName>
        <ecNumber evidence="1">3.6.1.54</ecNumber>
    </recommendedName>
    <alternativeName>
        <fullName evidence="1">UDP-2,3-diacylglucosamine diphosphatase</fullName>
    </alternativeName>
</protein>
<organism>
    <name type="scientific">Salmonella dublin (strain CT_02021853)</name>
    <dbReference type="NCBI Taxonomy" id="439851"/>
    <lineage>
        <taxon>Bacteria</taxon>
        <taxon>Pseudomonadati</taxon>
        <taxon>Pseudomonadota</taxon>
        <taxon>Gammaproteobacteria</taxon>
        <taxon>Enterobacterales</taxon>
        <taxon>Enterobacteriaceae</taxon>
        <taxon>Salmonella</taxon>
    </lineage>
</organism>
<comment type="function">
    <text evidence="1">Hydrolyzes the pyrophosphate bond of UDP-2,3-diacylglucosamine to yield 2,3-diacylglucosamine 1-phosphate (lipid X) and UMP by catalyzing the attack of water at the alpha-P atom. Involved in the biosynthesis of lipid A, a phosphorylated glycolipid that anchors the lipopolysaccharide to the outer membrane of the cell.</text>
</comment>
<comment type="catalytic activity">
    <reaction evidence="1">
        <text>UDP-2-N,3-O-bis[(3R)-3-hydroxytetradecanoyl]-alpha-D-glucosamine + H2O = 2-N,3-O-bis[(3R)-3-hydroxytetradecanoyl]-alpha-D-glucosaminyl 1-phosphate + UMP + 2 H(+)</text>
        <dbReference type="Rhea" id="RHEA:25213"/>
        <dbReference type="ChEBI" id="CHEBI:15377"/>
        <dbReference type="ChEBI" id="CHEBI:15378"/>
        <dbReference type="ChEBI" id="CHEBI:57865"/>
        <dbReference type="ChEBI" id="CHEBI:57957"/>
        <dbReference type="ChEBI" id="CHEBI:78847"/>
        <dbReference type="EC" id="3.6.1.54"/>
    </reaction>
</comment>
<comment type="cofactor">
    <cofactor evidence="1">
        <name>Mn(2+)</name>
        <dbReference type="ChEBI" id="CHEBI:29035"/>
    </cofactor>
    <text evidence="1">Binds 2 Mn(2+) ions per subunit in a binuclear metal center.</text>
</comment>
<comment type="pathway">
    <text evidence="1">Glycolipid biosynthesis; lipid IV(A) biosynthesis; lipid IV(A) from (3R)-3-hydroxytetradecanoyl-[acyl-carrier-protein] and UDP-N-acetyl-alpha-D-glucosamine: step 4/6.</text>
</comment>
<comment type="subcellular location">
    <subcellularLocation>
        <location evidence="1">Cell inner membrane</location>
        <topology evidence="1">Peripheral membrane protein</topology>
        <orientation evidence="1">Cytoplasmic side</orientation>
    </subcellularLocation>
</comment>
<comment type="similarity">
    <text evidence="1">Belongs to the LpxH family.</text>
</comment>
<evidence type="ECO:0000255" key="1">
    <source>
        <dbReference type="HAMAP-Rule" id="MF_00575"/>
    </source>
</evidence>
<reference key="1">
    <citation type="journal article" date="2011" name="J. Bacteriol.">
        <title>Comparative genomics of 28 Salmonella enterica isolates: evidence for CRISPR-mediated adaptive sublineage evolution.</title>
        <authorList>
            <person name="Fricke W.F."/>
            <person name="Mammel M.K."/>
            <person name="McDermott P.F."/>
            <person name="Tartera C."/>
            <person name="White D.G."/>
            <person name="Leclerc J.E."/>
            <person name="Ravel J."/>
            <person name="Cebula T.A."/>
        </authorList>
    </citation>
    <scope>NUCLEOTIDE SEQUENCE [LARGE SCALE GENOMIC DNA]</scope>
    <source>
        <strain>CT_02021853</strain>
    </source>
</reference>